<sequence>MTTGHGVGPADAAGGPARHLPVMLAEVLAHLAPKDAGRYVDGTFGAGGYTRGILNAADCRVLAIDRDPTAIAAGADLVAEAAGRLTLVNDRFSRLDAVAQEHDFSPLDGVVLDIGVSSMQLDQAERGFSFRRDGPLDMRMGDTGPSAADLVATLDEVQLAHLIWSLGEERHSRPIARAIVKARDESPITRTAQLAEIVSRIVWQKPGEMHPATRTFQALRIAVNEELSELVQALVAAERALAPGGRLVVVTFHSLEDRIVKTFLSNRAKAPSASRHLPQAEGPEPAFRLVAKGVVEPGPDEVAGNPRARSAKLRAAERTNAPAHPGGDLMGLLPAPPPQRHGRRR</sequence>
<comment type="function">
    <text evidence="1">Specifically methylates the N4 position of cytidine in position 1402 (C1402) of 16S rRNA.</text>
</comment>
<comment type="catalytic activity">
    <reaction evidence="1">
        <text>cytidine(1402) in 16S rRNA + S-adenosyl-L-methionine = N(4)-methylcytidine(1402) in 16S rRNA + S-adenosyl-L-homocysteine + H(+)</text>
        <dbReference type="Rhea" id="RHEA:42928"/>
        <dbReference type="Rhea" id="RHEA-COMP:10286"/>
        <dbReference type="Rhea" id="RHEA-COMP:10287"/>
        <dbReference type="ChEBI" id="CHEBI:15378"/>
        <dbReference type="ChEBI" id="CHEBI:57856"/>
        <dbReference type="ChEBI" id="CHEBI:59789"/>
        <dbReference type="ChEBI" id="CHEBI:74506"/>
        <dbReference type="ChEBI" id="CHEBI:82748"/>
        <dbReference type="EC" id="2.1.1.199"/>
    </reaction>
</comment>
<comment type="subcellular location">
    <subcellularLocation>
        <location evidence="1">Cytoplasm</location>
    </subcellularLocation>
</comment>
<comment type="similarity">
    <text evidence="1">Belongs to the methyltransferase superfamily. RsmH family.</text>
</comment>
<proteinExistence type="inferred from homology"/>
<name>RSMH_XANP2</name>
<dbReference type="EC" id="2.1.1.199" evidence="1"/>
<dbReference type="EMBL" id="CP000781">
    <property type="protein sequence ID" value="ABS67097.1"/>
    <property type="molecule type" value="Genomic_DNA"/>
</dbReference>
<dbReference type="SMR" id="A7IGF4"/>
<dbReference type="STRING" id="78245.Xaut_1852"/>
<dbReference type="KEGG" id="xau:Xaut_1852"/>
<dbReference type="eggNOG" id="COG0275">
    <property type="taxonomic scope" value="Bacteria"/>
</dbReference>
<dbReference type="HOGENOM" id="CLU_038422_1_1_5"/>
<dbReference type="OrthoDB" id="9806637at2"/>
<dbReference type="PhylomeDB" id="A7IGF4"/>
<dbReference type="Proteomes" id="UP000002417">
    <property type="component" value="Chromosome"/>
</dbReference>
<dbReference type="GO" id="GO:0005737">
    <property type="term" value="C:cytoplasm"/>
    <property type="evidence" value="ECO:0007669"/>
    <property type="project" value="UniProtKB-SubCell"/>
</dbReference>
<dbReference type="GO" id="GO:0071424">
    <property type="term" value="F:rRNA (cytosine-N4-)-methyltransferase activity"/>
    <property type="evidence" value="ECO:0007669"/>
    <property type="project" value="UniProtKB-UniRule"/>
</dbReference>
<dbReference type="GO" id="GO:0070475">
    <property type="term" value="P:rRNA base methylation"/>
    <property type="evidence" value="ECO:0007669"/>
    <property type="project" value="UniProtKB-UniRule"/>
</dbReference>
<dbReference type="FunFam" id="1.10.150.170:FF:000003">
    <property type="entry name" value="Ribosomal RNA small subunit methyltransferase H"/>
    <property type="match status" value="1"/>
</dbReference>
<dbReference type="Gene3D" id="1.10.150.170">
    <property type="entry name" value="Putative methyltransferase TM0872, insert domain"/>
    <property type="match status" value="1"/>
</dbReference>
<dbReference type="Gene3D" id="3.40.50.150">
    <property type="entry name" value="Vaccinia Virus protein VP39"/>
    <property type="match status" value="1"/>
</dbReference>
<dbReference type="HAMAP" id="MF_01007">
    <property type="entry name" value="16SrRNA_methyltr_H"/>
    <property type="match status" value="1"/>
</dbReference>
<dbReference type="InterPro" id="IPR002903">
    <property type="entry name" value="RsmH"/>
</dbReference>
<dbReference type="InterPro" id="IPR023397">
    <property type="entry name" value="SAM-dep_MeTrfase_MraW_recog"/>
</dbReference>
<dbReference type="InterPro" id="IPR029063">
    <property type="entry name" value="SAM-dependent_MTases_sf"/>
</dbReference>
<dbReference type="NCBIfam" id="TIGR00006">
    <property type="entry name" value="16S rRNA (cytosine(1402)-N(4))-methyltransferase RsmH"/>
    <property type="match status" value="1"/>
</dbReference>
<dbReference type="PANTHER" id="PTHR11265:SF0">
    <property type="entry name" value="12S RRNA N4-METHYLCYTIDINE METHYLTRANSFERASE"/>
    <property type="match status" value="1"/>
</dbReference>
<dbReference type="PANTHER" id="PTHR11265">
    <property type="entry name" value="S-ADENOSYL-METHYLTRANSFERASE MRAW"/>
    <property type="match status" value="1"/>
</dbReference>
<dbReference type="Pfam" id="PF01795">
    <property type="entry name" value="Methyltransf_5"/>
    <property type="match status" value="1"/>
</dbReference>
<dbReference type="PIRSF" id="PIRSF004486">
    <property type="entry name" value="MraW"/>
    <property type="match status" value="1"/>
</dbReference>
<dbReference type="SUPFAM" id="SSF81799">
    <property type="entry name" value="Putative methyltransferase TM0872, insert domain"/>
    <property type="match status" value="1"/>
</dbReference>
<dbReference type="SUPFAM" id="SSF53335">
    <property type="entry name" value="S-adenosyl-L-methionine-dependent methyltransferases"/>
    <property type="match status" value="1"/>
</dbReference>
<evidence type="ECO:0000255" key="1">
    <source>
        <dbReference type="HAMAP-Rule" id="MF_01007"/>
    </source>
</evidence>
<evidence type="ECO:0000256" key="2">
    <source>
        <dbReference type="SAM" id="MobiDB-lite"/>
    </source>
</evidence>
<feature type="chain" id="PRO_0000387212" description="Ribosomal RNA small subunit methyltransferase H">
    <location>
        <begin position="1"/>
        <end position="345"/>
    </location>
</feature>
<feature type="region of interest" description="Disordered" evidence="2">
    <location>
        <begin position="296"/>
        <end position="345"/>
    </location>
</feature>
<feature type="binding site" evidence="1">
    <location>
        <begin position="47"/>
        <end position="49"/>
    </location>
    <ligand>
        <name>S-adenosyl-L-methionine</name>
        <dbReference type="ChEBI" id="CHEBI:59789"/>
    </ligand>
</feature>
<feature type="binding site" evidence="1">
    <location>
        <position position="65"/>
    </location>
    <ligand>
        <name>S-adenosyl-L-methionine</name>
        <dbReference type="ChEBI" id="CHEBI:59789"/>
    </ligand>
</feature>
<feature type="binding site" evidence="1">
    <location>
        <position position="92"/>
    </location>
    <ligand>
        <name>S-adenosyl-L-methionine</name>
        <dbReference type="ChEBI" id="CHEBI:59789"/>
    </ligand>
</feature>
<feature type="binding site" evidence="1">
    <location>
        <position position="113"/>
    </location>
    <ligand>
        <name>S-adenosyl-L-methionine</name>
        <dbReference type="ChEBI" id="CHEBI:59789"/>
    </ligand>
</feature>
<feature type="binding site" evidence="1">
    <location>
        <position position="120"/>
    </location>
    <ligand>
        <name>S-adenosyl-L-methionine</name>
        <dbReference type="ChEBI" id="CHEBI:59789"/>
    </ligand>
</feature>
<keyword id="KW-0963">Cytoplasm</keyword>
<keyword id="KW-0489">Methyltransferase</keyword>
<keyword id="KW-1185">Reference proteome</keyword>
<keyword id="KW-0698">rRNA processing</keyword>
<keyword id="KW-0949">S-adenosyl-L-methionine</keyword>
<keyword id="KW-0808">Transferase</keyword>
<accession>A7IGF4</accession>
<reference key="1">
    <citation type="submission" date="2007-07" db="EMBL/GenBank/DDBJ databases">
        <title>Complete sequence of chromosome of Xanthobacter autotrophicus Py2.</title>
        <authorList>
            <consortium name="US DOE Joint Genome Institute"/>
            <person name="Copeland A."/>
            <person name="Lucas S."/>
            <person name="Lapidus A."/>
            <person name="Barry K."/>
            <person name="Glavina del Rio T."/>
            <person name="Hammon N."/>
            <person name="Israni S."/>
            <person name="Dalin E."/>
            <person name="Tice H."/>
            <person name="Pitluck S."/>
            <person name="Sims D."/>
            <person name="Brettin T."/>
            <person name="Bruce D."/>
            <person name="Detter J.C."/>
            <person name="Han C."/>
            <person name="Tapia R."/>
            <person name="Brainard J."/>
            <person name="Schmutz J."/>
            <person name="Larimer F."/>
            <person name="Land M."/>
            <person name="Hauser L."/>
            <person name="Kyrpides N."/>
            <person name="Kim E."/>
            <person name="Ensigns S.A."/>
            <person name="Richardson P."/>
        </authorList>
    </citation>
    <scope>NUCLEOTIDE SEQUENCE [LARGE SCALE GENOMIC DNA]</scope>
    <source>
        <strain>ATCC BAA-1158 / Py2</strain>
    </source>
</reference>
<organism>
    <name type="scientific">Xanthobacter autotrophicus (strain ATCC BAA-1158 / Py2)</name>
    <dbReference type="NCBI Taxonomy" id="78245"/>
    <lineage>
        <taxon>Bacteria</taxon>
        <taxon>Pseudomonadati</taxon>
        <taxon>Pseudomonadota</taxon>
        <taxon>Alphaproteobacteria</taxon>
        <taxon>Hyphomicrobiales</taxon>
        <taxon>Xanthobacteraceae</taxon>
        <taxon>Xanthobacter</taxon>
    </lineage>
</organism>
<protein>
    <recommendedName>
        <fullName evidence="1">Ribosomal RNA small subunit methyltransferase H</fullName>
        <ecNumber evidence="1">2.1.1.199</ecNumber>
    </recommendedName>
    <alternativeName>
        <fullName evidence="1">16S rRNA m(4)C1402 methyltransferase</fullName>
    </alternativeName>
    <alternativeName>
        <fullName evidence="1">rRNA (cytosine-N(4)-)-methyltransferase RsmH</fullName>
    </alternativeName>
</protein>
<gene>
    <name evidence="1" type="primary">rsmH</name>
    <name type="synonym">mraW</name>
    <name type="ordered locus">Xaut_1852</name>
</gene>